<name>REXO4_NEUCR</name>
<feature type="chain" id="PRO_0000131698" description="RNA exonuclease 4">
    <location>
        <begin position="1"/>
        <end position="406"/>
    </location>
</feature>
<feature type="domain" description="Exonuclease">
    <location>
        <begin position="216"/>
        <end position="367"/>
    </location>
</feature>
<feature type="region of interest" description="Disordered" evidence="2">
    <location>
        <begin position="1"/>
        <end position="108"/>
    </location>
</feature>
<feature type="region of interest" description="Disordered" evidence="2">
    <location>
        <begin position="156"/>
        <end position="181"/>
    </location>
</feature>
<feature type="region of interest" description="Disordered" evidence="2">
    <location>
        <begin position="377"/>
        <end position="406"/>
    </location>
</feature>
<feature type="compositionally biased region" description="Polar residues" evidence="2">
    <location>
        <begin position="1"/>
        <end position="10"/>
    </location>
</feature>
<feature type="compositionally biased region" description="Low complexity" evidence="2">
    <location>
        <begin position="54"/>
        <end position="64"/>
    </location>
</feature>
<feature type="compositionally biased region" description="Low complexity" evidence="2">
    <location>
        <begin position="72"/>
        <end position="82"/>
    </location>
</feature>
<feature type="compositionally biased region" description="Low complexity" evidence="2">
    <location>
        <begin position="94"/>
        <end position="108"/>
    </location>
</feature>
<feature type="compositionally biased region" description="Polar residues" evidence="2">
    <location>
        <begin position="162"/>
        <end position="173"/>
    </location>
</feature>
<feature type="compositionally biased region" description="Basic and acidic residues" evidence="2">
    <location>
        <begin position="377"/>
        <end position="387"/>
    </location>
</feature>
<feature type="compositionally biased region" description="Gly residues" evidence="2">
    <location>
        <begin position="388"/>
        <end position="398"/>
    </location>
</feature>
<reference key="1">
    <citation type="journal article" date="2003" name="Nature">
        <title>The genome sequence of the filamentous fungus Neurospora crassa.</title>
        <authorList>
            <person name="Galagan J.E."/>
            <person name="Calvo S.E."/>
            <person name="Borkovich K.A."/>
            <person name="Selker E.U."/>
            <person name="Read N.D."/>
            <person name="Jaffe D.B."/>
            <person name="FitzHugh W."/>
            <person name="Ma L.-J."/>
            <person name="Smirnov S."/>
            <person name="Purcell S."/>
            <person name="Rehman B."/>
            <person name="Elkins T."/>
            <person name="Engels R."/>
            <person name="Wang S."/>
            <person name="Nielsen C.B."/>
            <person name="Butler J."/>
            <person name="Endrizzi M."/>
            <person name="Qui D."/>
            <person name="Ianakiev P."/>
            <person name="Bell-Pedersen D."/>
            <person name="Nelson M.A."/>
            <person name="Werner-Washburne M."/>
            <person name="Selitrennikoff C.P."/>
            <person name="Kinsey J.A."/>
            <person name="Braun E.L."/>
            <person name="Zelter A."/>
            <person name="Schulte U."/>
            <person name="Kothe G.O."/>
            <person name="Jedd G."/>
            <person name="Mewes H.-W."/>
            <person name="Staben C."/>
            <person name="Marcotte E."/>
            <person name="Greenberg D."/>
            <person name="Roy A."/>
            <person name="Foley K."/>
            <person name="Naylor J."/>
            <person name="Stange-Thomann N."/>
            <person name="Barrett R."/>
            <person name="Gnerre S."/>
            <person name="Kamal M."/>
            <person name="Kamvysselis M."/>
            <person name="Mauceli E.W."/>
            <person name="Bielke C."/>
            <person name="Rudd S."/>
            <person name="Frishman D."/>
            <person name="Krystofova S."/>
            <person name="Rasmussen C."/>
            <person name="Metzenberg R.L."/>
            <person name="Perkins D.D."/>
            <person name="Kroken S."/>
            <person name="Cogoni C."/>
            <person name="Macino G."/>
            <person name="Catcheside D.E.A."/>
            <person name="Li W."/>
            <person name="Pratt R.J."/>
            <person name="Osmani S.A."/>
            <person name="DeSouza C.P.C."/>
            <person name="Glass N.L."/>
            <person name="Orbach M.J."/>
            <person name="Berglund J.A."/>
            <person name="Voelker R."/>
            <person name="Yarden O."/>
            <person name="Plamann M."/>
            <person name="Seiler S."/>
            <person name="Dunlap J.C."/>
            <person name="Radford A."/>
            <person name="Aramayo R."/>
            <person name="Natvig D.O."/>
            <person name="Alex L.A."/>
            <person name="Mannhaupt G."/>
            <person name="Ebbole D.J."/>
            <person name="Freitag M."/>
            <person name="Paulsen I."/>
            <person name="Sachs M.S."/>
            <person name="Lander E.S."/>
            <person name="Nusbaum C."/>
            <person name="Birren B.W."/>
        </authorList>
    </citation>
    <scope>NUCLEOTIDE SEQUENCE [LARGE SCALE GENOMIC DNA]</scope>
    <source>
        <strain>ATCC 24698 / 74-OR23-1A / CBS 708.71 / DSM 1257 / FGSC 987</strain>
    </source>
</reference>
<evidence type="ECO:0000250" key="1"/>
<evidence type="ECO:0000256" key="2">
    <source>
        <dbReference type="SAM" id="MobiDB-lite"/>
    </source>
</evidence>
<evidence type="ECO:0000305" key="3"/>
<organism>
    <name type="scientific">Neurospora crassa (strain ATCC 24698 / 74-OR23-1A / CBS 708.71 / DSM 1257 / FGSC 987)</name>
    <dbReference type="NCBI Taxonomy" id="367110"/>
    <lineage>
        <taxon>Eukaryota</taxon>
        <taxon>Fungi</taxon>
        <taxon>Dikarya</taxon>
        <taxon>Ascomycota</taxon>
        <taxon>Pezizomycotina</taxon>
        <taxon>Sordariomycetes</taxon>
        <taxon>Sordariomycetidae</taxon>
        <taxon>Sordariales</taxon>
        <taxon>Sordariaceae</taxon>
        <taxon>Neurospora</taxon>
    </lineage>
</organism>
<gene>
    <name type="primary">rex-4</name>
    <name type="ORF">NCU05217</name>
</gene>
<keyword id="KW-0269">Exonuclease</keyword>
<keyword id="KW-0378">Hydrolase</keyword>
<keyword id="KW-0540">Nuclease</keyword>
<keyword id="KW-0539">Nucleus</keyword>
<keyword id="KW-1185">Reference proteome</keyword>
<keyword id="KW-0698">rRNA processing</keyword>
<dbReference type="EC" id="3.1.-.-"/>
<dbReference type="EMBL" id="CM002239">
    <property type="protein sequence ID" value="EAA32980.1"/>
    <property type="molecule type" value="Genomic_DNA"/>
</dbReference>
<dbReference type="RefSeq" id="XP_962216.1">
    <property type="nucleotide sequence ID" value="XM_957123.2"/>
</dbReference>
<dbReference type="SMR" id="Q7S9B7"/>
<dbReference type="FunCoup" id="Q7S9B7">
    <property type="interactions" value="765"/>
</dbReference>
<dbReference type="STRING" id="367110.Q7S9B7"/>
<dbReference type="PaxDb" id="5141-EFNCRP00000005039"/>
<dbReference type="EnsemblFungi" id="EAA32980">
    <property type="protein sequence ID" value="EAA32980"/>
    <property type="gene ID" value="NCU05217"/>
</dbReference>
<dbReference type="GeneID" id="3878364"/>
<dbReference type="KEGG" id="ncr:NCU05217"/>
<dbReference type="VEuPathDB" id="FungiDB:NCU05217"/>
<dbReference type="HOGENOM" id="CLU_022453_2_1_1"/>
<dbReference type="InParanoid" id="Q7S9B7"/>
<dbReference type="OMA" id="HVSGISK"/>
<dbReference type="OrthoDB" id="8191639at2759"/>
<dbReference type="Proteomes" id="UP000001805">
    <property type="component" value="Chromosome 4, Linkage Group IV"/>
</dbReference>
<dbReference type="GO" id="GO:0005634">
    <property type="term" value="C:nucleus"/>
    <property type="evidence" value="ECO:0000318"/>
    <property type="project" value="GO_Central"/>
</dbReference>
<dbReference type="GO" id="GO:0008408">
    <property type="term" value="F:3'-5' exonuclease activity"/>
    <property type="evidence" value="ECO:0007669"/>
    <property type="project" value="InterPro"/>
</dbReference>
<dbReference type="GO" id="GO:0004527">
    <property type="term" value="F:exonuclease activity"/>
    <property type="evidence" value="ECO:0000318"/>
    <property type="project" value="GO_Central"/>
</dbReference>
<dbReference type="GO" id="GO:0003676">
    <property type="term" value="F:nucleic acid binding"/>
    <property type="evidence" value="ECO:0007669"/>
    <property type="project" value="InterPro"/>
</dbReference>
<dbReference type="GO" id="GO:0006396">
    <property type="term" value="P:RNA processing"/>
    <property type="evidence" value="ECO:0000318"/>
    <property type="project" value="GO_Central"/>
</dbReference>
<dbReference type="GO" id="GO:0006364">
    <property type="term" value="P:rRNA processing"/>
    <property type="evidence" value="ECO:0007669"/>
    <property type="project" value="UniProtKB-KW"/>
</dbReference>
<dbReference type="CDD" id="cd06144">
    <property type="entry name" value="REX4_like"/>
    <property type="match status" value="1"/>
</dbReference>
<dbReference type="FunFam" id="3.30.420.10:FF:000007">
    <property type="entry name" value="Interferon-stimulated exonuclease gene 20"/>
    <property type="match status" value="1"/>
</dbReference>
<dbReference type="Gene3D" id="3.30.420.10">
    <property type="entry name" value="Ribonuclease H-like superfamily/Ribonuclease H"/>
    <property type="match status" value="1"/>
</dbReference>
<dbReference type="InterPro" id="IPR013520">
    <property type="entry name" value="Exonuclease_RNaseT/DNA_pol3"/>
</dbReference>
<dbReference type="InterPro" id="IPR037431">
    <property type="entry name" value="REX4_DEDDh_dom"/>
</dbReference>
<dbReference type="InterPro" id="IPR047021">
    <property type="entry name" value="REXO1/3/4-like"/>
</dbReference>
<dbReference type="InterPro" id="IPR012337">
    <property type="entry name" value="RNaseH-like_sf"/>
</dbReference>
<dbReference type="InterPro" id="IPR036397">
    <property type="entry name" value="RNaseH_sf"/>
</dbReference>
<dbReference type="PANTHER" id="PTHR12801:SF45">
    <property type="entry name" value="RNA EXONUCLEASE 4"/>
    <property type="match status" value="1"/>
</dbReference>
<dbReference type="PANTHER" id="PTHR12801">
    <property type="entry name" value="RNA EXONUCLEASE REXO1 / RECO3 FAMILY MEMBER-RELATED"/>
    <property type="match status" value="1"/>
</dbReference>
<dbReference type="Pfam" id="PF00929">
    <property type="entry name" value="RNase_T"/>
    <property type="match status" value="1"/>
</dbReference>
<dbReference type="SMART" id="SM00479">
    <property type="entry name" value="EXOIII"/>
    <property type="match status" value="1"/>
</dbReference>
<dbReference type="SUPFAM" id="SSF53098">
    <property type="entry name" value="Ribonuclease H-like"/>
    <property type="match status" value="1"/>
</dbReference>
<sequence>MAPELSSNWKKLQEKLKAPQPTKSAPISQEAAFKQAISKKSISSETLKRKAEESQQQQQASNPSKKPKRQKSQTQSQPSSQKPTEEKMGGNVQSKPTTSSSPNSTLPSLHLWADEQGISSESLAEAYNLGLRGTSSSSSSSHIPLLSTLPPAIPNAGLTLPGHSSSSPKSNKNGLPLPTDLPSSLTLSNGLTLDTSTTTDLALILQATKSNTLGKYLSIDCEMVGTGPSGATSVLARCSIVDFHGHQIYDSYVRPTAFVTDWRTHVSGISKRHMASARSFESVQATVAALLKGRILVGHDVKHDLEVLGFEHPHRDIRDTAKYSGFRKYGHGPKPSLRVLAKEVLGIEIHQGQHSSVEDARVAMLLFRKEKHGFDMENSNRYEEGQAKKGGNGGGGGGGKKKKGKK</sequence>
<proteinExistence type="inferred from homology"/>
<accession>Q7S9B7</accession>
<comment type="function">
    <text evidence="1">Exoribonuclease involved in ribosome biosynthesis. Involved in the processing of ITS1, the internal transcribed spacer localized between the 18S and 5.8S rRNAs (By similarity).</text>
</comment>
<comment type="subcellular location">
    <subcellularLocation>
        <location evidence="1">Nucleus</location>
    </subcellularLocation>
</comment>
<comment type="similarity">
    <text evidence="3">Belongs to the REXO4 family.</text>
</comment>
<protein>
    <recommendedName>
        <fullName>RNA exonuclease 4</fullName>
        <ecNumber>3.1.-.-</ecNumber>
    </recommendedName>
</protein>